<reference key="1">
    <citation type="submission" date="2006-03" db="EMBL/GenBank/DDBJ databases">
        <title>Complete sequence of Methylobacillus flagellatus KT.</title>
        <authorList>
            <consortium name="US DOE Joint Genome Institute"/>
            <person name="Copeland A."/>
            <person name="Lucas S."/>
            <person name="Lapidus A."/>
            <person name="Barry K."/>
            <person name="Detter J.C."/>
            <person name="Glavina del Rio T."/>
            <person name="Hammon N."/>
            <person name="Israni S."/>
            <person name="Dalin E."/>
            <person name="Tice H."/>
            <person name="Pitluck S."/>
            <person name="Brettin T."/>
            <person name="Bruce D."/>
            <person name="Han C."/>
            <person name="Tapia R."/>
            <person name="Saunders E."/>
            <person name="Gilna P."/>
            <person name="Schmutz J."/>
            <person name="Larimer F."/>
            <person name="Land M."/>
            <person name="Kyrpides N."/>
            <person name="Anderson I."/>
            <person name="Richardson P."/>
        </authorList>
    </citation>
    <scope>NUCLEOTIDE SEQUENCE [LARGE SCALE GENOMIC DNA]</scope>
    <source>
        <strain>ATCC 51484 / DSM 6875 / VKM B-1610 / KT</strain>
    </source>
</reference>
<protein>
    <recommendedName>
        <fullName evidence="1">Small ribosomal subunit protein bS20</fullName>
    </recommendedName>
    <alternativeName>
        <fullName evidence="3">30S ribosomal protein S20</fullName>
    </alternativeName>
</protein>
<organism>
    <name type="scientific">Methylobacillus flagellatus (strain ATCC 51484 / DSM 6875 / VKM B-1610 / KT)</name>
    <dbReference type="NCBI Taxonomy" id="265072"/>
    <lineage>
        <taxon>Bacteria</taxon>
        <taxon>Pseudomonadati</taxon>
        <taxon>Pseudomonadota</taxon>
        <taxon>Betaproteobacteria</taxon>
        <taxon>Nitrosomonadales</taxon>
        <taxon>Methylophilaceae</taxon>
        <taxon>Methylobacillus</taxon>
    </lineage>
</organism>
<accession>Q1GZ59</accession>
<feature type="chain" id="PRO_0000260125" description="Small ribosomal subunit protein bS20">
    <location>
        <begin position="1"/>
        <end position="87"/>
    </location>
</feature>
<feature type="region of interest" description="Disordered" evidence="2">
    <location>
        <begin position="1"/>
        <end position="22"/>
    </location>
</feature>
<feature type="compositionally biased region" description="Basic residues" evidence="2">
    <location>
        <begin position="7"/>
        <end position="19"/>
    </location>
</feature>
<evidence type="ECO:0000255" key="1">
    <source>
        <dbReference type="HAMAP-Rule" id="MF_00500"/>
    </source>
</evidence>
<evidence type="ECO:0000256" key="2">
    <source>
        <dbReference type="SAM" id="MobiDB-lite"/>
    </source>
</evidence>
<evidence type="ECO:0000305" key="3"/>
<name>RS20_METFK</name>
<dbReference type="EMBL" id="CP000284">
    <property type="protein sequence ID" value="ABE50478.1"/>
    <property type="molecule type" value="Genomic_DNA"/>
</dbReference>
<dbReference type="RefSeq" id="WP_011480432.1">
    <property type="nucleotide sequence ID" value="NC_007947.1"/>
</dbReference>
<dbReference type="SMR" id="Q1GZ59"/>
<dbReference type="STRING" id="265072.Mfla_2211"/>
<dbReference type="KEGG" id="mfa:Mfla_2211"/>
<dbReference type="eggNOG" id="COG0268">
    <property type="taxonomic scope" value="Bacteria"/>
</dbReference>
<dbReference type="HOGENOM" id="CLU_160655_4_0_4"/>
<dbReference type="OrthoDB" id="9807974at2"/>
<dbReference type="Proteomes" id="UP000002440">
    <property type="component" value="Chromosome"/>
</dbReference>
<dbReference type="GO" id="GO:0005829">
    <property type="term" value="C:cytosol"/>
    <property type="evidence" value="ECO:0007669"/>
    <property type="project" value="TreeGrafter"/>
</dbReference>
<dbReference type="GO" id="GO:0015935">
    <property type="term" value="C:small ribosomal subunit"/>
    <property type="evidence" value="ECO:0007669"/>
    <property type="project" value="TreeGrafter"/>
</dbReference>
<dbReference type="GO" id="GO:0070181">
    <property type="term" value="F:small ribosomal subunit rRNA binding"/>
    <property type="evidence" value="ECO:0007669"/>
    <property type="project" value="TreeGrafter"/>
</dbReference>
<dbReference type="GO" id="GO:0003735">
    <property type="term" value="F:structural constituent of ribosome"/>
    <property type="evidence" value="ECO:0007669"/>
    <property type="project" value="InterPro"/>
</dbReference>
<dbReference type="GO" id="GO:0006412">
    <property type="term" value="P:translation"/>
    <property type="evidence" value="ECO:0007669"/>
    <property type="project" value="UniProtKB-UniRule"/>
</dbReference>
<dbReference type="FunFam" id="1.20.58.110:FF:000001">
    <property type="entry name" value="30S ribosomal protein S20"/>
    <property type="match status" value="1"/>
</dbReference>
<dbReference type="Gene3D" id="1.20.58.110">
    <property type="entry name" value="Ribosomal protein S20"/>
    <property type="match status" value="1"/>
</dbReference>
<dbReference type="HAMAP" id="MF_00500">
    <property type="entry name" value="Ribosomal_bS20"/>
    <property type="match status" value="1"/>
</dbReference>
<dbReference type="InterPro" id="IPR002583">
    <property type="entry name" value="Ribosomal_bS20"/>
</dbReference>
<dbReference type="InterPro" id="IPR036510">
    <property type="entry name" value="Ribosomal_bS20_sf"/>
</dbReference>
<dbReference type="NCBIfam" id="TIGR00029">
    <property type="entry name" value="S20"/>
    <property type="match status" value="1"/>
</dbReference>
<dbReference type="PANTHER" id="PTHR33398">
    <property type="entry name" value="30S RIBOSOMAL PROTEIN S20"/>
    <property type="match status" value="1"/>
</dbReference>
<dbReference type="PANTHER" id="PTHR33398:SF1">
    <property type="entry name" value="SMALL RIBOSOMAL SUBUNIT PROTEIN BS20C"/>
    <property type="match status" value="1"/>
</dbReference>
<dbReference type="Pfam" id="PF01649">
    <property type="entry name" value="Ribosomal_S20p"/>
    <property type="match status" value="1"/>
</dbReference>
<dbReference type="SUPFAM" id="SSF46992">
    <property type="entry name" value="Ribosomal protein S20"/>
    <property type="match status" value="1"/>
</dbReference>
<keyword id="KW-1185">Reference proteome</keyword>
<keyword id="KW-0687">Ribonucleoprotein</keyword>
<keyword id="KW-0689">Ribosomal protein</keyword>
<keyword id="KW-0694">RNA-binding</keyword>
<keyword id="KW-0699">rRNA-binding</keyword>
<proteinExistence type="inferred from homology"/>
<gene>
    <name evidence="1" type="primary">rpsT</name>
    <name type="ordered locus">Mfla_2211</name>
</gene>
<sequence length="87" mass="9482">MANSAQARKRARQAVKQRAHNASLRSALRTAIKKIIKAVEAGDKTAAQSVFNENVSVIDRIADKKIIHKNKAARHKSRLSAAIKALA</sequence>
<comment type="function">
    <text evidence="1">Binds directly to 16S ribosomal RNA.</text>
</comment>
<comment type="similarity">
    <text evidence="1">Belongs to the bacterial ribosomal protein bS20 family.</text>
</comment>